<comment type="function">
    <text evidence="1">Required for maturation of 30S ribosomal subunits.</text>
</comment>
<comment type="subcellular location">
    <subcellularLocation>
        <location evidence="1">Cytoplasm</location>
    </subcellularLocation>
</comment>
<comment type="similarity">
    <text evidence="1">Belongs to the RimP family.</text>
</comment>
<proteinExistence type="inferred from homology"/>
<keyword id="KW-0963">Cytoplasm</keyword>
<keyword id="KW-1185">Reference proteome</keyword>
<keyword id="KW-0690">Ribosome biogenesis</keyword>
<sequence>MSTLEQKLTEMITAPVEALGFELVGIEFIRGRTSTLRIYIDSEDGINVDDCADVSHQVSAVLDVEDPITVAYNLEVSSPGLDRPLFTAEHYARFVGEEVTLVLRMAVQNRRKWQGVIKAVDGEMITVTVEGKDEVFALSNIQKANLVPHF</sequence>
<reference key="1">
    <citation type="journal article" date="2008" name="J. Bacteriol.">
        <title>The pangenome structure of Escherichia coli: comparative genomic analysis of E. coli commensal and pathogenic isolates.</title>
        <authorList>
            <person name="Rasko D.A."/>
            <person name="Rosovitz M.J."/>
            <person name="Myers G.S.A."/>
            <person name="Mongodin E.F."/>
            <person name="Fricke W.F."/>
            <person name="Gajer P."/>
            <person name="Crabtree J."/>
            <person name="Sebaihia M."/>
            <person name="Thomson N.R."/>
            <person name="Chaudhuri R."/>
            <person name="Henderson I.R."/>
            <person name="Sperandio V."/>
            <person name="Ravel J."/>
        </authorList>
    </citation>
    <scope>NUCLEOTIDE SEQUENCE [LARGE SCALE GENOMIC DNA]</scope>
    <source>
        <strain>E24377A / ETEC</strain>
    </source>
</reference>
<name>RIMP_ECO24</name>
<evidence type="ECO:0000255" key="1">
    <source>
        <dbReference type="HAMAP-Rule" id="MF_01077"/>
    </source>
</evidence>
<accession>A7ZS68</accession>
<dbReference type="EMBL" id="CP000800">
    <property type="protein sequence ID" value="ABV21164.1"/>
    <property type="molecule type" value="Genomic_DNA"/>
</dbReference>
<dbReference type="RefSeq" id="WP_001300397.1">
    <property type="nucleotide sequence ID" value="NC_009801.1"/>
</dbReference>
<dbReference type="SMR" id="A7ZS68"/>
<dbReference type="GeneID" id="93778813"/>
<dbReference type="KEGG" id="ecw:EcE24377A_3655"/>
<dbReference type="HOGENOM" id="CLU_070525_1_1_6"/>
<dbReference type="Proteomes" id="UP000001122">
    <property type="component" value="Chromosome"/>
</dbReference>
<dbReference type="GO" id="GO:0005829">
    <property type="term" value="C:cytosol"/>
    <property type="evidence" value="ECO:0007669"/>
    <property type="project" value="TreeGrafter"/>
</dbReference>
<dbReference type="GO" id="GO:0000028">
    <property type="term" value="P:ribosomal small subunit assembly"/>
    <property type="evidence" value="ECO:0007669"/>
    <property type="project" value="TreeGrafter"/>
</dbReference>
<dbReference type="GO" id="GO:0006412">
    <property type="term" value="P:translation"/>
    <property type="evidence" value="ECO:0007669"/>
    <property type="project" value="TreeGrafter"/>
</dbReference>
<dbReference type="CDD" id="cd01734">
    <property type="entry name" value="YlxS_C"/>
    <property type="match status" value="1"/>
</dbReference>
<dbReference type="FunFam" id="2.30.30.180:FF:000001">
    <property type="entry name" value="Ribosome maturation factor RimP"/>
    <property type="match status" value="1"/>
</dbReference>
<dbReference type="FunFam" id="3.30.300.70:FF:000001">
    <property type="entry name" value="Ribosome maturation factor RimP"/>
    <property type="match status" value="1"/>
</dbReference>
<dbReference type="Gene3D" id="2.30.30.180">
    <property type="entry name" value="Ribosome maturation factor RimP, C-terminal domain"/>
    <property type="match status" value="1"/>
</dbReference>
<dbReference type="Gene3D" id="3.30.300.70">
    <property type="entry name" value="RimP-like superfamily, N-terminal"/>
    <property type="match status" value="1"/>
</dbReference>
<dbReference type="HAMAP" id="MF_01077">
    <property type="entry name" value="RimP"/>
    <property type="match status" value="1"/>
</dbReference>
<dbReference type="InterPro" id="IPR003728">
    <property type="entry name" value="Ribosome_maturation_RimP"/>
</dbReference>
<dbReference type="InterPro" id="IPR028998">
    <property type="entry name" value="RimP_C"/>
</dbReference>
<dbReference type="InterPro" id="IPR036847">
    <property type="entry name" value="RimP_C_sf"/>
</dbReference>
<dbReference type="InterPro" id="IPR028989">
    <property type="entry name" value="RimP_N"/>
</dbReference>
<dbReference type="InterPro" id="IPR035956">
    <property type="entry name" value="RimP_N_sf"/>
</dbReference>
<dbReference type="NCBIfam" id="NF000927">
    <property type="entry name" value="PRK00092.1-1"/>
    <property type="match status" value="1"/>
</dbReference>
<dbReference type="PANTHER" id="PTHR33867">
    <property type="entry name" value="RIBOSOME MATURATION FACTOR RIMP"/>
    <property type="match status" value="1"/>
</dbReference>
<dbReference type="PANTHER" id="PTHR33867:SF1">
    <property type="entry name" value="RIBOSOME MATURATION FACTOR RIMP"/>
    <property type="match status" value="1"/>
</dbReference>
<dbReference type="Pfam" id="PF17384">
    <property type="entry name" value="DUF150_C"/>
    <property type="match status" value="1"/>
</dbReference>
<dbReference type="Pfam" id="PF02576">
    <property type="entry name" value="RimP_N"/>
    <property type="match status" value="1"/>
</dbReference>
<dbReference type="SUPFAM" id="SSF74942">
    <property type="entry name" value="YhbC-like, C-terminal domain"/>
    <property type="match status" value="1"/>
</dbReference>
<dbReference type="SUPFAM" id="SSF75420">
    <property type="entry name" value="YhbC-like, N-terminal domain"/>
    <property type="match status" value="1"/>
</dbReference>
<protein>
    <recommendedName>
        <fullName evidence="1">Ribosome maturation factor RimP</fullName>
    </recommendedName>
</protein>
<gene>
    <name evidence="1" type="primary">rimP</name>
    <name type="ordered locus">EcE24377A_3655</name>
</gene>
<feature type="chain" id="PRO_0000384657" description="Ribosome maturation factor RimP">
    <location>
        <begin position="1"/>
        <end position="150"/>
    </location>
</feature>
<organism>
    <name type="scientific">Escherichia coli O139:H28 (strain E24377A / ETEC)</name>
    <dbReference type="NCBI Taxonomy" id="331111"/>
    <lineage>
        <taxon>Bacteria</taxon>
        <taxon>Pseudomonadati</taxon>
        <taxon>Pseudomonadota</taxon>
        <taxon>Gammaproteobacteria</taxon>
        <taxon>Enterobacterales</taxon>
        <taxon>Enterobacteriaceae</taxon>
        <taxon>Escherichia</taxon>
    </lineage>
</organism>